<name>UPL3_ARATH</name>
<organism>
    <name type="scientific">Arabidopsis thaliana</name>
    <name type="common">Mouse-ear cress</name>
    <dbReference type="NCBI Taxonomy" id="3702"/>
    <lineage>
        <taxon>Eukaryota</taxon>
        <taxon>Viridiplantae</taxon>
        <taxon>Streptophyta</taxon>
        <taxon>Embryophyta</taxon>
        <taxon>Tracheophyta</taxon>
        <taxon>Spermatophyta</taxon>
        <taxon>Magnoliopsida</taxon>
        <taxon>eudicotyledons</taxon>
        <taxon>Gunneridae</taxon>
        <taxon>Pentapetalae</taxon>
        <taxon>rosids</taxon>
        <taxon>malvids</taxon>
        <taxon>Brassicales</taxon>
        <taxon>Brassicaceae</taxon>
        <taxon>Camelineae</taxon>
        <taxon>Arabidopsis</taxon>
    </lineage>
</organism>
<evidence type="ECO:0000255" key="1">
    <source>
        <dbReference type="PROSITE-ProRule" id="PRU00104"/>
    </source>
</evidence>
<evidence type="ECO:0000256" key="2">
    <source>
        <dbReference type="SAM" id="MobiDB-lite"/>
    </source>
</evidence>
<evidence type="ECO:0000269" key="3">
    <source>
    </source>
</evidence>
<evidence type="ECO:0000269" key="4">
    <source>
    </source>
</evidence>
<evidence type="ECO:0000305" key="5"/>
<protein>
    <recommendedName>
        <fullName>E3 ubiquitin-protein ligase UPL3</fullName>
        <shortName>Ubiquitin-protein ligase 3</shortName>
        <ecNumber>2.3.2.26</ecNumber>
    </recommendedName>
    <alternativeName>
        <fullName>HECT ubiquitin-protein ligase 3</fullName>
    </alternativeName>
    <alternativeName>
        <fullName>HECT-type E3 ubiquitin transferase UPL3</fullName>
    </alternativeName>
    <alternativeName>
        <fullName>Protein KAKTUS</fullName>
    </alternativeName>
</protein>
<dbReference type="EC" id="2.3.2.26"/>
<dbReference type="EMBL" id="AY265959">
    <property type="protein sequence ID" value="AAP91821.1"/>
    <property type="molecule type" value="mRNA"/>
</dbReference>
<dbReference type="EMBL" id="AL035540">
    <property type="protein sequence ID" value="CAB37516.1"/>
    <property type="status" value="ALT_SEQ"/>
    <property type="molecule type" value="Genomic_DNA"/>
</dbReference>
<dbReference type="EMBL" id="AL035540">
    <property type="protein sequence ID" value="CAB37517.1"/>
    <property type="status" value="ALT_SEQ"/>
    <property type="molecule type" value="Genomic_DNA"/>
</dbReference>
<dbReference type="EMBL" id="AL161593">
    <property type="protein sequence ID" value="CAB80524.1"/>
    <property type="status" value="ALT_SEQ"/>
    <property type="molecule type" value="Genomic_DNA"/>
</dbReference>
<dbReference type="EMBL" id="AL161593">
    <property type="protein sequence ID" value="CAB80525.1"/>
    <property type="status" value="ALT_SEQ"/>
    <property type="molecule type" value="Genomic_DNA"/>
</dbReference>
<dbReference type="EMBL" id="CP002687">
    <property type="protein sequence ID" value="AEE86954.1"/>
    <property type="molecule type" value="Genomic_DNA"/>
</dbReference>
<dbReference type="EMBL" id="CP002687">
    <property type="protein sequence ID" value="ANM67531.1"/>
    <property type="molecule type" value="Genomic_DNA"/>
</dbReference>
<dbReference type="EMBL" id="AK229635">
    <property type="protein sequence ID" value="BAF01480.1"/>
    <property type="molecule type" value="mRNA"/>
</dbReference>
<dbReference type="EMBL" id="BN000268">
    <property type="protein sequence ID" value="CAE30362.1"/>
    <property type="molecule type" value="mRNA"/>
</dbReference>
<dbReference type="PIR" id="T05688">
    <property type="entry name" value="T05688"/>
</dbReference>
<dbReference type="PIR" id="T05689">
    <property type="entry name" value="T05689"/>
</dbReference>
<dbReference type="RefSeq" id="NP_001329354.1">
    <molecule id="Q6WWW4-1"/>
    <property type="nucleotide sequence ID" value="NM_001342508.1"/>
</dbReference>
<dbReference type="RefSeq" id="NP_849567.2">
    <molecule id="Q6WWW4-1"/>
    <property type="nucleotide sequence ID" value="NM_179236.3"/>
</dbReference>
<dbReference type="SMR" id="Q6WWW4"/>
<dbReference type="BioGRID" id="15297">
    <property type="interactions" value="2"/>
</dbReference>
<dbReference type="FunCoup" id="Q6WWW4">
    <property type="interactions" value="4438"/>
</dbReference>
<dbReference type="STRING" id="3702.Q6WWW4"/>
<dbReference type="GlyGen" id="Q6WWW4">
    <property type="glycosylation" value="2 sites"/>
</dbReference>
<dbReference type="iPTMnet" id="Q6WWW4"/>
<dbReference type="PaxDb" id="3702-AT4G38600.1"/>
<dbReference type="ProteomicsDB" id="233003">
    <molecule id="Q6WWW4-1"/>
</dbReference>
<dbReference type="EnsemblPlants" id="AT4G38600.1">
    <molecule id="Q6WWW4-1"/>
    <property type="protein sequence ID" value="AT4G38600.1"/>
    <property type="gene ID" value="AT4G38600"/>
</dbReference>
<dbReference type="EnsemblPlants" id="AT4G38600.3">
    <molecule id="Q6WWW4-1"/>
    <property type="protein sequence ID" value="AT4G38600.3"/>
    <property type="gene ID" value="AT4G38600"/>
</dbReference>
<dbReference type="GeneID" id="830017"/>
<dbReference type="Gramene" id="AT4G38600.1">
    <molecule id="Q6WWW4-1"/>
    <property type="protein sequence ID" value="AT4G38600.1"/>
    <property type="gene ID" value="AT4G38600"/>
</dbReference>
<dbReference type="Gramene" id="AT4G38600.3">
    <molecule id="Q6WWW4-1"/>
    <property type="protein sequence ID" value="AT4G38600.3"/>
    <property type="gene ID" value="AT4G38600"/>
</dbReference>
<dbReference type="KEGG" id="ath:AT4G38600"/>
<dbReference type="Araport" id="AT4G38600"/>
<dbReference type="TAIR" id="AT4G38600">
    <property type="gene designation" value="KAK"/>
</dbReference>
<dbReference type="eggNOG" id="KOG0168">
    <property type="taxonomic scope" value="Eukaryota"/>
</dbReference>
<dbReference type="eggNOG" id="KOG0170">
    <property type="taxonomic scope" value="Eukaryota"/>
</dbReference>
<dbReference type="InParanoid" id="Q6WWW4"/>
<dbReference type="OMA" id="AEPLSQF"/>
<dbReference type="PhylomeDB" id="Q6WWW4"/>
<dbReference type="BRENDA" id="2.3.2.26">
    <property type="organism ID" value="399"/>
</dbReference>
<dbReference type="UniPathway" id="UPA00143"/>
<dbReference type="PRO" id="PR:Q6WWW4"/>
<dbReference type="Proteomes" id="UP000006548">
    <property type="component" value="Chromosome 4"/>
</dbReference>
<dbReference type="ExpressionAtlas" id="Q6WWW4">
    <property type="expression patterns" value="baseline and differential"/>
</dbReference>
<dbReference type="GO" id="GO:0005886">
    <property type="term" value="C:plasma membrane"/>
    <property type="evidence" value="ECO:0007005"/>
    <property type="project" value="TAIR"/>
</dbReference>
<dbReference type="GO" id="GO:0061630">
    <property type="term" value="F:ubiquitin protein ligase activity"/>
    <property type="evidence" value="ECO:0000318"/>
    <property type="project" value="GO_Central"/>
</dbReference>
<dbReference type="GO" id="GO:0004842">
    <property type="term" value="F:ubiquitin-protein transferase activity"/>
    <property type="evidence" value="ECO:0000250"/>
    <property type="project" value="TAIR"/>
</dbReference>
<dbReference type="GO" id="GO:0042023">
    <property type="term" value="P:DNA endoreduplication"/>
    <property type="evidence" value="ECO:0000315"/>
    <property type="project" value="TAIR"/>
</dbReference>
<dbReference type="GO" id="GO:0043161">
    <property type="term" value="P:proteasome-mediated ubiquitin-dependent protein catabolic process"/>
    <property type="evidence" value="ECO:0000318"/>
    <property type="project" value="GO_Central"/>
</dbReference>
<dbReference type="GO" id="GO:0000209">
    <property type="term" value="P:protein polyubiquitination"/>
    <property type="evidence" value="ECO:0000318"/>
    <property type="project" value="GO_Central"/>
</dbReference>
<dbReference type="GO" id="GO:0010091">
    <property type="term" value="P:trichome branching"/>
    <property type="evidence" value="ECO:0000315"/>
    <property type="project" value="TAIR"/>
</dbReference>
<dbReference type="CDD" id="cd00078">
    <property type="entry name" value="HECTc"/>
    <property type="match status" value="1"/>
</dbReference>
<dbReference type="FunFam" id="3.90.1750.10:FF:000048">
    <property type="entry name" value="E3 ubiquitin-protein ligase UPL3"/>
    <property type="match status" value="1"/>
</dbReference>
<dbReference type="FunFam" id="1.25.10.10:FF:000689">
    <property type="entry name" value="HECT ubiquitin protein ligase family protein KAK"/>
    <property type="match status" value="1"/>
</dbReference>
<dbReference type="FunFam" id="3.30.2410.10:FF:000007">
    <property type="entry name" value="Putative E3 ubiquitin-protein ligase HECTD1"/>
    <property type="match status" value="1"/>
</dbReference>
<dbReference type="Gene3D" id="3.30.2410.10">
    <property type="entry name" value="Hect, E3 ligase catalytic domain"/>
    <property type="match status" value="1"/>
</dbReference>
<dbReference type="Gene3D" id="3.90.1750.10">
    <property type="entry name" value="Hect, E3 ligase catalytic domains"/>
    <property type="match status" value="1"/>
</dbReference>
<dbReference type="Gene3D" id="1.25.10.10">
    <property type="entry name" value="Leucine-rich Repeat Variant"/>
    <property type="match status" value="1"/>
</dbReference>
<dbReference type="InterPro" id="IPR011989">
    <property type="entry name" value="ARM-like"/>
</dbReference>
<dbReference type="InterPro" id="IPR016024">
    <property type="entry name" value="ARM-type_fold"/>
</dbReference>
<dbReference type="InterPro" id="IPR000225">
    <property type="entry name" value="Armadillo"/>
</dbReference>
<dbReference type="InterPro" id="IPR000569">
    <property type="entry name" value="HECT_dom"/>
</dbReference>
<dbReference type="InterPro" id="IPR035983">
    <property type="entry name" value="Hect_E3_ubiquitin_ligase"/>
</dbReference>
<dbReference type="InterPro" id="IPR045322">
    <property type="entry name" value="HECTD1/TRIP12-like"/>
</dbReference>
<dbReference type="PANTHER" id="PTHR45670:SF1">
    <property type="entry name" value="E3 UBIQUITIN-PROTEIN LIGASE HECTD1"/>
    <property type="match status" value="1"/>
</dbReference>
<dbReference type="PANTHER" id="PTHR45670">
    <property type="entry name" value="E3 UBIQUITIN-PROTEIN LIGASE TRIP12"/>
    <property type="match status" value="1"/>
</dbReference>
<dbReference type="Pfam" id="PF00632">
    <property type="entry name" value="HECT"/>
    <property type="match status" value="1"/>
</dbReference>
<dbReference type="SMART" id="SM00185">
    <property type="entry name" value="ARM"/>
    <property type="match status" value="3"/>
</dbReference>
<dbReference type="SMART" id="SM00119">
    <property type="entry name" value="HECTc"/>
    <property type="match status" value="1"/>
</dbReference>
<dbReference type="SUPFAM" id="SSF48371">
    <property type="entry name" value="ARM repeat"/>
    <property type="match status" value="1"/>
</dbReference>
<dbReference type="SUPFAM" id="SSF56204">
    <property type="entry name" value="Hect, E3 ligase catalytic domain"/>
    <property type="match status" value="1"/>
</dbReference>
<dbReference type="PROSITE" id="PS50237">
    <property type="entry name" value="HECT"/>
    <property type="match status" value="1"/>
</dbReference>
<comment type="function">
    <text evidence="3 4">Probable E3 ubiquitin-protein ligase which mediates ubiquitination and subsequent proteasomal degradation of target proteins. Involved in the repression of endoreduplication process and the cell morphogenesis in the trichomes.</text>
</comment>
<comment type="catalytic activity">
    <reaction>
        <text>S-ubiquitinyl-[E2 ubiquitin-conjugating enzyme]-L-cysteine + [acceptor protein]-L-lysine = [E2 ubiquitin-conjugating enzyme]-L-cysteine + N(6)-ubiquitinyl-[acceptor protein]-L-lysine.</text>
        <dbReference type="EC" id="2.3.2.26"/>
    </reaction>
</comment>
<comment type="pathway">
    <text>Protein modification; protein ubiquitination.</text>
</comment>
<comment type="alternative products">
    <event type="alternative splicing"/>
    <isoform>
        <id>Q6WWW4-1</id>
        <name>1</name>
        <sequence type="displayed"/>
    </isoform>
    <text>A number of isoforms are produced. According to EST sequences.</text>
</comment>
<comment type="tissue specificity">
    <text evidence="4">Widely expressed.</text>
</comment>
<comment type="similarity">
    <text evidence="5">Belongs to the UPL family. K-HECT subfamily.</text>
</comment>
<comment type="sequence caution" evidence="5">
    <conflict type="erroneous gene model prediction">
        <sequence resource="EMBL-CDS" id="CAB37516"/>
    </conflict>
    <text>Was originally thought to correspond to two different genes At4g38600 and At4g38610.</text>
</comment>
<comment type="sequence caution" evidence="5">
    <conflict type="erroneous gene model prediction">
        <sequence resource="EMBL-CDS" id="CAB37517"/>
    </conflict>
    <text>Was originally thought to correspond to two different genes At4g38600 and At4g38610.</text>
</comment>
<comment type="sequence caution" evidence="5">
    <conflict type="erroneous gene model prediction">
        <sequence resource="EMBL-CDS" id="CAB80524"/>
    </conflict>
    <text>Was originally thought to correspond to two different genes At4g38600 and At4g38610.</text>
</comment>
<comment type="sequence caution" evidence="5">
    <conflict type="erroneous gene model prediction">
        <sequence resource="EMBL-CDS" id="CAB80525"/>
    </conflict>
    <text>Was originally thought to correspond to two different genes At4g38600 and At4g38610.</text>
</comment>
<proteinExistence type="evidence at protein level"/>
<sequence length="1888" mass="202928">METRSRKRAEATSAAPSSSSSSPPPPPSASGPTTRSKRARLSSSSSSSLAPTPPSSSTTTRSRSSRSAAAAAPMDTSTDSSGFRRGGRGNRGNNNDNSDKGKEKEHDVRIRERERERDRAREQLNMDAAAAAARSADEDDDNDSEDGNGGFMHPNMSSASSALQGLLRKLGAGLDDLLPSSGIGSASSSHLNGRMKKILSGLRAEGEEGKQVEALTQLCEMLSIGTEDSLSTFSVDSFVPVLVGLLNHESNPDIMLLAARALTHLCDVLPSSCAAVVHYGAVSCLVARLLTIEYMDLAEQSLQALKKISQEHPTACLRAGALMAVLSYLDFFSTGVQRVALSTAANMCKKLPSDASDYVMEAVPLLTNLLQYHDSKVLEYASICLTRIAEAFAPYPEKLDELCNHGLVTQAASLISTSNSGGGQASLSVSTYTGLIRLLSTCASGSPLGFRTLLLLGISSILKDILLGSGVSANASVSPALSRPADQIYEIVNLANELLPPLPEGVISLPTSTNALVKGSCQKKSSPSTSGKQEDILKISPREKLLGDQPELLQQFGLDLLPVLVQIYGSSVNGTIRHKCLSVIGKLMYFSSSEMIQSLIGDTNISSFLAGVLAWKDPQVLVPALQVAEILMEKLPETFSKVFVREGVVHAVDQLVLVGKPSHASPTDKDNDCVPGSARSRRYRRRSSNANSDGNQSEEPKNPASLTIGANHNSLDTPTASFMLRETVSSCAKAFKDKYFPSDGGDVDVGVTDDLLHLKNLCTKLTAGIDDHKVKGKGKSKASGPFLGDFSASKEEYLIGVISEILGEISKGDGVSTFEFIGSGVVAALLNYFSCGYFSKEKISELNLPKLRQEGLRRFKAFLEVALPFDGNEGKVPPMTVLIQKLQNALSSLERFPVVLSHPSRSLSGSARLSSGLSALAHPLKLRLCRASGEKTLRDYSSNIVLIDPLASLAAVEEFLWPRVQRSESALKPAAPIGNTEPGTLPSGAGVSSPSSSTPASTTRRHSSRSRSAINIGDTSKKDPVHEKGTSSSKGKGKGVMKPAQADKGPQTRSNAQKRAVLDKDTQMKPASGDSSSEDEELEISPVDIDDALVIEEDDISDDEDDDNEDVLDDSLPMCTPDKVHDVKLADSVDDDGLATSGRQMNPASGGTSGAAAARASDSIDTGIGNSYGSRGALSFAAAAMAGLGAASGRGIRGSRDLHGRTLNRSSDEPSKLIFTAAGKQLSRHLTIYQAVQRQLMLDEDDDDRFGGSDLVSSDGSRFNDIYTIMYQRPDSQVNRLSVGGASSTTPSKSTKSATTNSSVESQSHRASLLDSILQGELPCDLEKSNSTYNVLALLRVLEGLNQLCPRLRAQTLSDRFAEGKITSLDDLSTTAAKVPLDEFVNSKLTPKLARQIQDALALCSGSLPSWCYQLTRACPFLFPFQTRRQYFYSTAFGLSRALNRLQQQQGADGSGSTNEREMRIGRLQRQKVRVSRNRILDSAAKVMEMYSSQKAVLEVEYFGEVGTGLGPTLEFYTLLSHDLQKASLGMWRSSSGDKVSMQIGRDEIEDGKPSAANRDIVLAPLGLFPRPWPSTADISEGGQFHKVIEYFRLLGRVMAKALQDGRLLDVPLSTAFYKLILGQELDLHDIVLFDAELGKTLQELRVVVARKHYLEGVGGDNSSTISDLCLRGCRIEDLSLEFTLPGYPEYILRSGDEIVDITNLEEYISLVVDATVKRGVTRQIEAFRSGFNQVFDITSLQIFTPSELDYLLCGRRELWEVETLAEHIKFDHGYNAKSPAIINLLEIMGELTADQQRAFCQFVTGAPRLPPGGLAVLNPKLTIVRKHSSTSSAAANGAGASETADDDLPSVMTCANYLKLPPYSTKEIMYKKLLYAINEGQGSFDLS</sequence>
<gene>
    <name type="primary">UPL3</name>
    <name type="synonym">KAK</name>
    <name type="ordered locus">At4g38600/At4g38610</name>
    <name type="ORF">F20M13.160/F20M13.170</name>
</gene>
<keyword id="KW-0025">Alternative splicing</keyword>
<keyword id="KW-1185">Reference proteome</keyword>
<keyword id="KW-0677">Repeat</keyword>
<keyword id="KW-0808">Transferase</keyword>
<keyword id="KW-0833">Ubl conjugation pathway</keyword>
<feature type="chain" id="PRO_0000312021" description="E3 ubiquitin-protein ligase UPL3">
    <location>
        <begin position="1"/>
        <end position="1888"/>
    </location>
</feature>
<feature type="repeat" description="ARM 1">
    <location>
        <begin position="227"/>
        <end position="267"/>
    </location>
</feature>
<feature type="repeat" description="ARM 2">
    <location>
        <begin position="270"/>
        <end position="310"/>
    </location>
</feature>
<feature type="repeat" description="ARM 3">
    <location>
        <begin position="312"/>
        <end position="349"/>
    </location>
</feature>
<feature type="repeat" description="ARM 4">
    <location>
        <begin position="351"/>
        <end position="390"/>
    </location>
</feature>
<feature type="domain" description="HECT" evidence="1">
    <location>
        <begin position="1490"/>
        <end position="1888"/>
    </location>
</feature>
<feature type="region of interest" description="Disordered" evidence="2">
    <location>
        <begin position="1"/>
        <end position="157"/>
    </location>
</feature>
<feature type="region of interest" description="Disordered" evidence="2">
    <location>
        <begin position="660"/>
        <end position="711"/>
    </location>
</feature>
<feature type="region of interest" description="Disordered" evidence="2">
    <location>
        <begin position="970"/>
        <end position="1119"/>
    </location>
</feature>
<feature type="region of interest" description="Disordered" evidence="2">
    <location>
        <begin position="1134"/>
        <end position="1157"/>
    </location>
</feature>
<feature type="region of interest" description="Disordered" evidence="2">
    <location>
        <begin position="1280"/>
        <end position="1307"/>
    </location>
</feature>
<feature type="region of interest" description="K-box">
    <location>
        <begin position="1377"/>
        <end position="1451"/>
    </location>
</feature>
<feature type="compositionally biased region" description="Basic and acidic residues" evidence="2">
    <location>
        <begin position="1"/>
        <end position="10"/>
    </location>
</feature>
<feature type="compositionally biased region" description="Low complexity" evidence="2">
    <location>
        <begin position="41"/>
        <end position="81"/>
    </location>
</feature>
<feature type="compositionally biased region" description="Basic and acidic residues" evidence="2">
    <location>
        <begin position="97"/>
        <end position="124"/>
    </location>
</feature>
<feature type="compositionally biased region" description="Acidic residues" evidence="2">
    <location>
        <begin position="137"/>
        <end position="146"/>
    </location>
</feature>
<feature type="compositionally biased region" description="Low complexity" evidence="2">
    <location>
        <begin position="986"/>
        <end position="1002"/>
    </location>
</feature>
<feature type="compositionally biased region" description="Basic and acidic residues" evidence="2">
    <location>
        <begin position="1019"/>
        <end position="1029"/>
    </location>
</feature>
<feature type="compositionally biased region" description="Acidic residues" evidence="2">
    <location>
        <begin position="1076"/>
        <end position="1113"/>
    </location>
</feature>
<feature type="compositionally biased region" description="Low complexity" evidence="2">
    <location>
        <begin position="1148"/>
        <end position="1157"/>
    </location>
</feature>
<feature type="compositionally biased region" description="Low complexity" evidence="2">
    <location>
        <begin position="1286"/>
        <end position="1303"/>
    </location>
</feature>
<feature type="active site" description="Glycyl thioester intermediate" evidence="1">
    <location>
        <position position="1855"/>
    </location>
</feature>
<reference key="1">
    <citation type="journal article" date="2003" name="Plant J.">
        <title>The HECT ubiquitin-protein ligase (UPL) family in Arabidopsis: UPL3 has a specific role in trichome development.</title>
        <authorList>
            <person name="Downes B.P."/>
            <person name="Stupar R.M."/>
            <person name="Gingerich D.J."/>
            <person name="Vierstra R.D."/>
        </authorList>
    </citation>
    <scope>NUCLEOTIDE SEQUENCE [MRNA]</scope>
    <scope>GENE FAMILY ORGANIZATION</scope>
</reference>
<reference key="2">
    <citation type="journal article" date="1999" name="Nature">
        <title>Sequence and analysis of chromosome 4 of the plant Arabidopsis thaliana.</title>
        <authorList>
            <person name="Mayer K.F.X."/>
            <person name="Schueller C."/>
            <person name="Wambutt R."/>
            <person name="Murphy G."/>
            <person name="Volckaert G."/>
            <person name="Pohl T."/>
            <person name="Duesterhoeft A."/>
            <person name="Stiekema W."/>
            <person name="Entian K.-D."/>
            <person name="Terryn N."/>
            <person name="Harris B."/>
            <person name="Ansorge W."/>
            <person name="Brandt P."/>
            <person name="Grivell L.A."/>
            <person name="Rieger M."/>
            <person name="Weichselgartner M."/>
            <person name="de Simone V."/>
            <person name="Obermaier B."/>
            <person name="Mache R."/>
            <person name="Mueller M."/>
            <person name="Kreis M."/>
            <person name="Delseny M."/>
            <person name="Puigdomenech P."/>
            <person name="Watson M."/>
            <person name="Schmidtheini T."/>
            <person name="Reichert B."/>
            <person name="Portetelle D."/>
            <person name="Perez-Alonso M."/>
            <person name="Boutry M."/>
            <person name="Bancroft I."/>
            <person name="Vos P."/>
            <person name="Hoheisel J."/>
            <person name="Zimmermann W."/>
            <person name="Wedler H."/>
            <person name="Ridley P."/>
            <person name="Langham S.-A."/>
            <person name="McCullagh B."/>
            <person name="Bilham L."/>
            <person name="Robben J."/>
            <person name="van der Schueren J."/>
            <person name="Grymonprez B."/>
            <person name="Chuang Y.-J."/>
            <person name="Vandenbussche F."/>
            <person name="Braeken M."/>
            <person name="Weltjens I."/>
            <person name="Voet M."/>
            <person name="Bastiaens I."/>
            <person name="Aert R."/>
            <person name="Defoor E."/>
            <person name="Weitzenegger T."/>
            <person name="Bothe G."/>
            <person name="Ramsperger U."/>
            <person name="Hilbert H."/>
            <person name="Braun M."/>
            <person name="Holzer E."/>
            <person name="Brandt A."/>
            <person name="Peters S."/>
            <person name="van Staveren M."/>
            <person name="Dirkse W."/>
            <person name="Mooijman P."/>
            <person name="Klein Lankhorst R."/>
            <person name="Rose M."/>
            <person name="Hauf J."/>
            <person name="Koetter P."/>
            <person name="Berneiser S."/>
            <person name="Hempel S."/>
            <person name="Feldpausch M."/>
            <person name="Lamberth S."/>
            <person name="Van den Daele H."/>
            <person name="De Keyser A."/>
            <person name="Buysshaert C."/>
            <person name="Gielen J."/>
            <person name="Villarroel R."/>
            <person name="De Clercq R."/>
            <person name="van Montagu M."/>
            <person name="Rogers J."/>
            <person name="Cronin A."/>
            <person name="Quail M.A."/>
            <person name="Bray-Allen S."/>
            <person name="Clark L."/>
            <person name="Doggett J."/>
            <person name="Hall S."/>
            <person name="Kay M."/>
            <person name="Lennard N."/>
            <person name="McLay K."/>
            <person name="Mayes R."/>
            <person name="Pettett A."/>
            <person name="Rajandream M.A."/>
            <person name="Lyne M."/>
            <person name="Benes V."/>
            <person name="Rechmann S."/>
            <person name="Borkova D."/>
            <person name="Bloecker H."/>
            <person name="Scharfe M."/>
            <person name="Grimm M."/>
            <person name="Loehnert T.-H."/>
            <person name="Dose S."/>
            <person name="de Haan M."/>
            <person name="Maarse A.C."/>
            <person name="Schaefer M."/>
            <person name="Mueller-Auer S."/>
            <person name="Gabel C."/>
            <person name="Fuchs M."/>
            <person name="Fartmann B."/>
            <person name="Granderath K."/>
            <person name="Dauner D."/>
            <person name="Herzl A."/>
            <person name="Neumann S."/>
            <person name="Argiriou A."/>
            <person name="Vitale D."/>
            <person name="Liguori R."/>
            <person name="Piravandi E."/>
            <person name="Massenet O."/>
            <person name="Quigley F."/>
            <person name="Clabauld G."/>
            <person name="Muendlein A."/>
            <person name="Felber R."/>
            <person name="Schnabl S."/>
            <person name="Hiller R."/>
            <person name="Schmidt W."/>
            <person name="Lecharny A."/>
            <person name="Aubourg S."/>
            <person name="Chefdor F."/>
            <person name="Cooke R."/>
            <person name="Berger C."/>
            <person name="Monfort A."/>
            <person name="Casacuberta E."/>
            <person name="Gibbons T."/>
            <person name="Weber N."/>
            <person name="Vandenbol M."/>
            <person name="Bargues M."/>
            <person name="Terol J."/>
            <person name="Torres A."/>
            <person name="Perez-Perez A."/>
            <person name="Purnelle B."/>
            <person name="Bent E."/>
            <person name="Johnson S."/>
            <person name="Tacon D."/>
            <person name="Jesse T."/>
            <person name="Heijnen L."/>
            <person name="Schwarz S."/>
            <person name="Scholler P."/>
            <person name="Heber S."/>
            <person name="Francs P."/>
            <person name="Bielke C."/>
            <person name="Frishman D."/>
            <person name="Haase D."/>
            <person name="Lemcke K."/>
            <person name="Mewes H.-W."/>
            <person name="Stocker S."/>
            <person name="Zaccaria P."/>
            <person name="Bevan M."/>
            <person name="Wilson R.K."/>
            <person name="de la Bastide M."/>
            <person name="Habermann K."/>
            <person name="Parnell L."/>
            <person name="Dedhia N."/>
            <person name="Gnoj L."/>
            <person name="Schutz K."/>
            <person name="Huang E."/>
            <person name="Spiegel L."/>
            <person name="Sekhon M."/>
            <person name="Murray J."/>
            <person name="Sheet P."/>
            <person name="Cordes M."/>
            <person name="Abu-Threideh J."/>
            <person name="Stoneking T."/>
            <person name="Kalicki J."/>
            <person name="Graves T."/>
            <person name="Harmon G."/>
            <person name="Edwards J."/>
            <person name="Latreille P."/>
            <person name="Courtney L."/>
            <person name="Cloud J."/>
            <person name="Abbott A."/>
            <person name="Scott K."/>
            <person name="Johnson D."/>
            <person name="Minx P."/>
            <person name="Bentley D."/>
            <person name="Fulton B."/>
            <person name="Miller N."/>
            <person name="Greco T."/>
            <person name="Kemp K."/>
            <person name="Kramer J."/>
            <person name="Fulton L."/>
            <person name="Mardis E."/>
            <person name="Dante M."/>
            <person name="Pepin K."/>
            <person name="Hillier L.W."/>
            <person name="Nelson J."/>
            <person name="Spieth J."/>
            <person name="Ryan E."/>
            <person name="Andrews S."/>
            <person name="Geisel C."/>
            <person name="Layman D."/>
            <person name="Du H."/>
            <person name="Ali J."/>
            <person name="Berghoff A."/>
            <person name="Jones K."/>
            <person name="Drone K."/>
            <person name="Cotton M."/>
            <person name="Joshu C."/>
            <person name="Antonoiu B."/>
            <person name="Zidanic M."/>
            <person name="Strong C."/>
            <person name="Sun H."/>
            <person name="Lamar B."/>
            <person name="Yordan C."/>
            <person name="Ma P."/>
            <person name="Zhong J."/>
            <person name="Preston R."/>
            <person name="Vil D."/>
            <person name="Shekher M."/>
            <person name="Matero A."/>
            <person name="Shah R."/>
            <person name="Swaby I.K."/>
            <person name="O'Shaughnessy A."/>
            <person name="Rodriguez M."/>
            <person name="Hoffman J."/>
            <person name="Till S."/>
            <person name="Granat S."/>
            <person name="Shohdy N."/>
            <person name="Hasegawa A."/>
            <person name="Hameed A."/>
            <person name="Lodhi M."/>
            <person name="Johnson A."/>
            <person name="Chen E."/>
            <person name="Marra M.A."/>
            <person name="Martienssen R."/>
            <person name="McCombie W.R."/>
        </authorList>
    </citation>
    <scope>NUCLEOTIDE SEQUENCE [LARGE SCALE GENOMIC DNA]</scope>
    <source>
        <strain>cv. Columbia</strain>
    </source>
</reference>
<reference key="3">
    <citation type="journal article" date="2017" name="Plant J.">
        <title>Araport11: a complete reannotation of the Arabidopsis thaliana reference genome.</title>
        <authorList>
            <person name="Cheng C.Y."/>
            <person name="Krishnakumar V."/>
            <person name="Chan A.P."/>
            <person name="Thibaud-Nissen F."/>
            <person name="Schobel S."/>
            <person name="Town C.D."/>
        </authorList>
    </citation>
    <scope>GENOME REANNOTATION</scope>
    <source>
        <strain>cv. Columbia</strain>
    </source>
</reference>
<reference key="4">
    <citation type="submission" date="2006-07" db="EMBL/GenBank/DDBJ databases">
        <title>Large-scale analysis of RIKEN Arabidopsis full-length (RAFL) cDNAs.</title>
        <authorList>
            <person name="Totoki Y."/>
            <person name="Seki M."/>
            <person name="Ishida J."/>
            <person name="Nakajima M."/>
            <person name="Enju A."/>
            <person name="Kamiya A."/>
            <person name="Narusaka M."/>
            <person name="Shin-i T."/>
            <person name="Nakagawa M."/>
            <person name="Sakamoto N."/>
            <person name="Oishi K."/>
            <person name="Kohara Y."/>
            <person name="Kobayashi M."/>
            <person name="Toyoda A."/>
            <person name="Sakaki Y."/>
            <person name="Sakurai T."/>
            <person name="Iida K."/>
            <person name="Akiyama K."/>
            <person name="Satou M."/>
            <person name="Toyoda T."/>
            <person name="Konagaya A."/>
            <person name="Carninci P."/>
            <person name="Kawai J."/>
            <person name="Hayashizaki Y."/>
            <person name="Shinozaki K."/>
        </authorList>
    </citation>
    <scope>NUCLEOTIDE SEQUENCE [LARGE SCALE MRNA] OF 1196-1888</scope>
    <source>
        <strain>cv. Columbia</strain>
    </source>
</reference>
<reference key="5">
    <citation type="journal article" date="2003" name="Mol. Genet. Genomics">
        <title>The Arabidopsis KAKTUS gene encodes a HECT protein and controls the number of endoreduplication cycles.</title>
        <authorList>
            <person name="El Refy A."/>
            <person name="Perazza D."/>
            <person name="Zekraoui L."/>
            <person name="Valay J.-G."/>
            <person name="Bechtold N."/>
            <person name="Brown S."/>
            <person name="Huelskamp M."/>
            <person name="Herzog M."/>
            <person name="Bonneville J.-M."/>
        </authorList>
    </citation>
    <scope>IDENTIFICATION</scope>
    <scope>FUNCTION</scope>
    <scope>TISSUE SPECIFICITY</scope>
    <source>
        <strain>cv. Columbia</strain>
    </source>
</reference>
<reference key="6">
    <citation type="journal article" date="1999" name="Genetics">
        <title>Trichome cell growth in Arabidopsis thaliana can be derepressed by mutations in at least five genes.</title>
        <authorList>
            <person name="Perazza D."/>
            <person name="Herzog M."/>
            <person name="Huelskamp M."/>
            <person name="Brown S."/>
            <person name="Dorne A.-M."/>
            <person name="Bonneville J.-M."/>
        </authorList>
    </citation>
    <scope>FUNCTION</scope>
</reference>
<reference key="7">
    <citation type="journal article" date="2009" name="Plant Physiol.">
        <title>Large-scale Arabidopsis phosphoproteome profiling reveals novel chloroplast kinase substrates and phosphorylation networks.</title>
        <authorList>
            <person name="Reiland S."/>
            <person name="Messerli G."/>
            <person name="Baerenfaller K."/>
            <person name="Gerrits B."/>
            <person name="Endler A."/>
            <person name="Grossmann J."/>
            <person name="Gruissem W."/>
            <person name="Baginsky S."/>
        </authorList>
    </citation>
    <scope>IDENTIFICATION BY MASS SPECTROMETRY [LARGE SCALE ANALYSIS]</scope>
</reference>
<accession>Q6WWW4</accession>
<accession>Q0WN20</accession>
<accession>Q9SZN9</accession>
<accession>Q9SZP0</accession>